<proteinExistence type="inferred from homology"/>
<organism>
    <name type="scientific">Bacillus cereus (strain G9842)</name>
    <dbReference type="NCBI Taxonomy" id="405531"/>
    <lineage>
        <taxon>Bacteria</taxon>
        <taxon>Bacillati</taxon>
        <taxon>Bacillota</taxon>
        <taxon>Bacilli</taxon>
        <taxon>Bacillales</taxon>
        <taxon>Bacillaceae</taxon>
        <taxon>Bacillus</taxon>
        <taxon>Bacillus cereus group</taxon>
    </lineage>
</organism>
<evidence type="ECO:0000255" key="1">
    <source>
        <dbReference type="HAMAP-Rule" id="MF_01576"/>
    </source>
</evidence>
<accession>B7IXH2</accession>
<protein>
    <recommendedName>
        <fullName evidence="1">Bifunctional protein FolD</fullName>
    </recommendedName>
    <domain>
        <recommendedName>
            <fullName evidence="1">Methylenetetrahydrofolate dehydrogenase</fullName>
            <ecNumber evidence="1">1.5.1.5</ecNumber>
        </recommendedName>
    </domain>
    <domain>
        <recommendedName>
            <fullName evidence="1">Methenyltetrahydrofolate cyclohydrolase</fullName>
            <ecNumber evidence="1">3.5.4.9</ecNumber>
        </recommendedName>
    </domain>
</protein>
<keyword id="KW-0028">Amino-acid biosynthesis</keyword>
<keyword id="KW-0368">Histidine biosynthesis</keyword>
<keyword id="KW-0378">Hydrolase</keyword>
<keyword id="KW-0486">Methionine biosynthesis</keyword>
<keyword id="KW-0511">Multifunctional enzyme</keyword>
<keyword id="KW-0521">NADP</keyword>
<keyword id="KW-0554">One-carbon metabolism</keyword>
<keyword id="KW-0560">Oxidoreductase</keyword>
<keyword id="KW-0658">Purine biosynthesis</keyword>
<feature type="chain" id="PRO_1000147439" description="Bifunctional protein FolD">
    <location>
        <begin position="1"/>
        <end position="286"/>
    </location>
</feature>
<feature type="binding site" evidence="1">
    <location>
        <begin position="165"/>
        <end position="167"/>
    </location>
    <ligand>
        <name>NADP(+)</name>
        <dbReference type="ChEBI" id="CHEBI:58349"/>
    </ligand>
</feature>
<feature type="binding site" evidence="1">
    <location>
        <position position="190"/>
    </location>
    <ligand>
        <name>NADP(+)</name>
        <dbReference type="ChEBI" id="CHEBI:58349"/>
    </ligand>
</feature>
<feature type="binding site" evidence="1">
    <location>
        <position position="231"/>
    </location>
    <ligand>
        <name>NADP(+)</name>
        <dbReference type="ChEBI" id="CHEBI:58349"/>
    </ligand>
</feature>
<name>FOLD_BACC2</name>
<comment type="function">
    <text evidence="1">Catalyzes the oxidation of 5,10-methylenetetrahydrofolate to 5,10-methenyltetrahydrofolate and then the hydrolysis of 5,10-methenyltetrahydrofolate to 10-formyltetrahydrofolate.</text>
</comment>
<comment type="catalytic activity">
    <reaction evidence="1">
        <text>(6R)-5,10-methylene-5,6,7,8-tetrahydrofolate + NADP(+) = (6R)-5,10-methenyltetrahydrofolate + NADPH</text>
        <dbReference type="Rhea" id="RHEA:22812"/>
        <dbReference type="ChEBI" id="CHEBI:15636"/>
        <dbReference type="ChEBI" id="CHEBI:57455"/>
        <dbReference type="ChEBI" id="CHEBI:57783"/>
        <dbReference type="ChEBI" id="CHEBI:58349"/>
        <dbReference type="EC" id="1.5.1.5"/>
    </reaction>
</comment>
<comment type="catalytic activity">
    <reaction evidence="1">
        <text>(6R)-5,10-methenyltetrahydrofolate + H2O = (6R)-10-formyltetrahydrofolate + H(+)</text>
        <dbReference type="Rhea" id="RHEA:23700"/>
        <dbReference type="ChEBI" id="CHEBI:15377"/>
        <dbReference type="ChEBI" id="CHEBI:15378"/>
        <dbReference type="ChEBI" id="CHEBI:57455"/>
        <dbReference type="ChEBI" id="CHEBI:195366"/>
        <dbReference type="EC" id="3.5.4.9"/>
    </reaction>
</comment>
<comment type="pathway">
    <text evidence="1">One-carbon metabolism; tetrahydrofolate interconversion.</text>
</comment>
<comment type="subunit">
    <text evidence="1">Homodimer.</text>
</comment>
<comment type="similarity">
    <text evidence="1">Belongs to the tetrahydrofolate dehydrogenase/cyclohydrolase family.</text>
</comment>
<sequence length="286" mass="31089">MVAVIIKGNEVAEKKRAQLTEEVVKLKEQGIVPGLAVILVGEDPASRSYVKGKEKGCEQVGIYSELIELPETITEERLLAEIDRLNGDDRINGILVQLPLPKHIEEKAIIERISPEKDVDGFHPISVGRMMTGQDTFLPCTPHGIVELVKETNLDISGKHVVVIGRSNIVGKPVGQLFLNENATVTYCHSKTQNMKELSKLADILIVAVGRPKMITADYIKEGAVVIDVGVNRLETGKLCGDVDFDNVLNVAGYITPVPKGVGPMTITMLLHNTVESAKRAGVVCK</sequence>
<gene>
    <name evidence="1" type="primary">folD</name>
    <name type="ordered locus">BCG9842_B0943</name>
</gene>
<reference key="1">
    <citation type="submission" date="2008-10" db="EMBL/GenBank/DDBJ databases">
        <title>Genome sequence of Bacillus cereus G9842.</title>
        <authorList>
            <person name="Dodson R.J."/>
            <person name="Durkin A.S."/>
            <person name="Rosovitz M.J."/>
            <person name="Rasko D.A."/>
            <person name="Hoffmaster A."/>
            <person name="Ravel J."/>
            <person name="Sutton G."/>
        </authorList>
    </citation>
    <scope>NUCLEOTIDE SEQUENCE [LARGE SCALE GENOMIC DNA]</scope>
    <source>
        <strain>G9842</strain>
    </source>
</reference>
<dbReference type="EC" id="1.5.1.5" evidence="1"/>
<dbReference type="EC" id="3.5.4.9" evidence="1"/>
<dbReference type="EMBL" id="CP001186">
    <property type="protein sequence ID" value="ACK97631.1"/>
    <property type="molecule type" value="Genomic_DNA"/>
</dbReference>
<dbReference type="RefSeq" id="WP_000226733.1">
    <property type="nucleotide sequence ID" value="NC_011772.1"/>
</dbReference>
<dbReference type="SMR" id="B7IXH2"/>
<dbReference type="KEGG" id="bcg:BCG9842_B0943"/>
<dbReference type="HOGENOM" id="CLU_034045_2_1_9"/>
<dbReference type="UniPathway" id="UPA00193"/>
<dbReference type="Proteomes" id="UP000006744">
    <property type="component" value="Chromosome"/>
</dbReference>
<dbReference type="GO" id="GO:0005829">
    <property type="term" value="C:cytosol"/>
    <property type="evidence" value="ECO:0007669"/>
    <property type="project" value="TreeGrafter"/>
</dbReference>
<dbReference type="GO" id="GO:0004477">
    <property type="term" value="F:methenyltetrahydrofolate cyclohydrolase activity"/>
    <property type="evidence" value="ECO:0007669"/>
    <property type="project" value="UniProtKB-UniRule"/>
</dbReference>
<dbReference type="GO" id="GO:0004488">
    <property type="term" value="F:methylenetetrahydrofolate dehydrogenase (NADP+) activity"/>
    <property type="evidence" value="ECO:0007669"/>
    <property type="project" value="UniProtKB-UniRule"/>
</dbReference>
<dbReference type="GO" id="GO:0000105">
    <property type="term" value="P:L-histidine biosynthetic process"/>
    <property type="evidence" value="ECO:0007669"/>
    <property type="project" value="UniProtKB-KW"/>
</dbReference>
<dbReference type="GO" id="GO:0009086">
    <property type="term" value="P:methionine biosynthetic process"/>
    <property type="evidence" value="ECO:0007669"/>
    <property type="project" value="UniProtKB-KW"/>
</dbReference>
<dbReference type="GO" id="GO:0006164">
    <property type="term" value="P:purine nucleotide biosynthetic process"/>
    <property type="evidence" value="ECO:0007669"/>
    <property type="project" value="UniProtKB-KW"/>
</dbReference>
<dbReference type="GO" id="GO:0035999">
    <property type="term" value="P:tetrahydrofolate interconversion"/>
    <property type="evidence" value="ECO:0007669"/>
    <property type="project" value="UniProtKB-UniRule"/>
</dbReference>
<dbReference type="CDD" id="cd01080">
    <property type="entry name" value="NAD_bind_m-THF_DH_Cyclohyd"/>
    <property type="match status" value="1"/>
</dbReference>
<dbReference type="FunFam" id="3.40.50.10860:FF:000001">
    <property type="entry name" value="Bifunctional protein FolD"/>
    <property type="match status" value="1"/>
</dbReference>
<dbReference type="FunFam" id="3.40.50.720:FF:000006">
    <property type="entry name" value="Bifunctional protein FolD"/>
    <property type="match status" value="1"/>
</dbReference>
<dbReference type="Gene3D" id="3.40.50.10860">
    <property type="entry name" value="Leucine Dehydrogenase, chain A, domain 1"/>
    <property type="match status" value="1"/>
</dbReference>
<dbReference type="Gene3D" id="3.40.50.720">
    <property type="entry name" value="NAD(P)-binding Rossmann-like Domain"/>
    <property type="match status" value="1"/>
</dbReference>
<dbReference type="HAMAP" id="MF_01576">
    <property type="entry name" value="THF_DHG_CYH"/>
    <property type="match status" value="1"/>
</dbReference>
<dbReference type="InterPro" id="IPR046346">
    <property type="entry name" value="Aminoacid_DH-like_N_sf"/>
</dbReference>
<dbReference type="InterPro" id="IPR036291">
    <property type="entry name" value="NAD(P)-bd_dom_sf"/>
</dbReference>
<dbReference type="InterPro" id="IPR000672">
    <property type="entry name" value="THF_DH/CycHdrlase"/>
</dbReference>
<dbReference type="InterPro" id="IPR020630">
    <property type="entry name" value="THF_DH/CycHdrlase_cat_dom"/>
</dbReference>
<dbReference type="InterPro" id="IPR020867">
    <property type="entry name" value="THF_DH/CycHdrlase_CS"/>
</dbReference>
<dbReference type="InterPro" id="IPR020631">
    <property type="entry name" value="THF_DH/CycHdrlase_NAD-bd_dom"/>
</dbReference>
<dbReference type="NCBIfam" id="NF008058">
    <property type="entry name" value="PRK10792.1"/>
    <property type="match status" value="1"/>
</dbReference>
<dbReference type="NCBIfam" id="NF010783">
    <property type="entry name" value="PRK14186.1"/>
    <property type="match status" value="1"/>
</dbReference>
<dbReference type="PANTHER" id="PTHR48099:SF5">
    <property type="entry name" value="C-1-TETRAHYDROFOLATE SYNTHASE, CYTOPLASMIC"/>
    <property type="match status" value="1"/>
</dbReference>
<dbReference type="PANTHER" id="PTHR48099">
    <property type="entry name" value="C-1-TETRAHYDROFOLATE SYNTHASE, CYTOPLASMIC-RELATED"/>
    <property type="match status" value="1"/>
</dbReference>
<dbReference type="Pfam" id="PF00763">
    <property type="entry name" value="THF_DHG_CYH"/>
    <property type="match status" value="1"/>
</dbReference>
<dbReference type="Pfam" id="PF02882">
    <property type="entry name" value="THF_DHG_CYH_C"/>
    <property type="match status" value="1"/>
</dbReference>
<dbReference type="PRINTS" id="PR00085">
    <property type="entry name" value="THFDHDRGNASE"/>
</dbReference>
<dbReference type="SUPFAM" id="SSF53223">
    <property type="entry name" value="Aminoacid dehydrogenase-like, N-terminal domain"/>
    <property type="match status" value="1"/>
</dbReference>
<dbReference type="SUPFAM" id="SSF51735">
    <property type="entry name" value="NAD(P)-binding Rossmann-fold domains"/>
    <property type="match status" value="1"/>
</dbReference>
<dbReference type="PROSITE" id="PS00767">
    <property type="entry name" value="THF_DHG_CYH_2"/>
    <property type="match status" value="1"/>
</dbReference>